<comment type="function">
    <text evidence="1">Transcriptional repressor of the nikABCDE operon. Is active in the presence of excessive concentrations of intracellular nickel.</text>
</comment>
<comment type="cofactor">
    <cofactor evidence="1">
        <name>Ni(2+)</name>
        <dbReference type="ChEBI" id="CHEBI:49786"/>
    </cofactor>
    <text evidence="1">Binds 1 nickel ion per subunit.</text>
</comment>
<comment type="subunit">
    <text evidence="1">Homotetramer.</text>
</comment>
<comment type="similarity">
    <text evidence="1">Belongs to the transcriptional regulatory CopG/NikR family.</text>
</comment>
<feature type="chain" id="PRO_1000125824" description="Nickel-responsive regulator">
    <location>
        <begin position="1"/>
        <end position="133"/>
    </location>
</feature>
<feature type="binding site" evidence="1">
    <location>
        <position position="76"/>
    </location>
    <ligand>
        <name>Ni(2+)</name>
        <dbReference type="ChEBI" id="CHEBI:49786"/>
    </ligand>
</feature>
<feature type="binding site" evidence="1">
    <location>
        <position position="87"/>
    </location>
    <ligand>
        <name>Ni(2+)</name>
        <dbReference type="ChEBI" id="CHEBI:49786"/>
    </ligand>
</feature>
<feature type="binding site" evidence="1">
    <location>
        <position position="89"/>
    </location>
    <ligand>
        <name>Ni(2+)</name>
        <dbReference type="ChEBI" id="CHEBI:49786"/>
    </ligand>
</feature>
<feature type="binding site" evidence="1">
    <location>
        <position position="95"/>
    </location>
    <ligand>
        <name>Ni(2+)</name>
        <dbReference type="ChEBI" id="CHEBI:49786"/>
    </ligand>
</feature>
<organism>
    <name type="scientific">Escherichia fergusonii (strain ATCC 35469 / DSM 13698 / CCUG 18766 / IAM 14443 / JCM 21226 / LMG 7866 / NBRC 102419 / NCTC 12128 / CDC 0568-73)</name>
    <dbReference type="NCBI Taxonomy" id="585054"/>
    <lineage>
        <taxon>Bacteria</taxon>
        <taxon>Pseudomonadati</taxon>
        <taxon>Pseudomonadota</taxon>
        <taxon>Gammaproteobacteria</taxon>
        <taxon>Enterobacterales</taxon>
        <taxon>Enterobacteriaceae</taxon>
        <taxon>Escherichia</taxon>
    </lineage>
</organism>
<protein>
    <recommendedName>
        <fullName evidence="1">Nickel-responsive regulator</fullName>
    </recommendedName>
</protein>
<proteinExistence type="inferred from homology"/>
<gene>
    <name evidence="1" type="primary">nikR</name>
    <name type="ordered locus">EFER_3468</name>
</gene>
<keyword id="KW-0238">DNA-binding</keyword>
<keyword id="KW-0479">Metal-binding</keyword>
<keyword id="KW-0533">Nickel</keyword>
<keyword id="KW-0678">Repressor</keyword>
<keyword id="KW-0804">Transcription</keyword>
<keyword id="KW-0805">Transcription regulation</keyword>
<sequence>MQRVTITLDDDLLETLDNLSQRRGYNNRSEAIRDILRGALAQESTQQHGTEGFAVLSYVYEHEKRDLASRIVSTQHHHHDLSVATLHVHINHDDCLEIAVLKGDMGDVQHFADDVISQRGVRHGHLQCLPKED</sequence>
<accession>B7LSV6</accession>
<dbReference type="EMBL" id="CU928158">
    <property type="protein sequence ID" value="CAQ90945.1"/>
    <property type="molecule type" value="Genomic_DNA"/>
</dbReference>
<dbReference type="RefSeq" id="WP_001190054.1">
    <property type="nucleotide sequence ID" value="NC_011740.1"/>
</dbReference>
<dbReference type="SMR" id="B7LSV6"/>
<dbReference type="GeneID" id="75059924"/>
<dbReference type="KEGG" id="efe:EFER_3468"/>
<dbReference type="HOGENOM" id="CLU_113319_1_4_6"/>
<dbReference type="OrthoDB" id="9806294at2"/>
<dbReference type="Proteomes" id="UP000000745">
    <property type="component" value="Chromosome"/>
</dbReference>
<dbReference type="GO" id="GO:0003700">
    <property type="term" value="F:DNA-binding transcription factor activity"/>
    <property type="evidence" value="ECO:0007669"/>
    <property type="project" value="UniProtKB-UniRule"/>
</dbReference>
<dbReference type="GO" id="GO:0016151">
    <property type="term" value="F:nickel cation binding"/>
    <property type="evidence" value="ECO:0007669"/>
    <property type="project" value="UniProtKB-UniRule"/>
</dbReference>
<dbReference type="GO" id="GO:0043565">
    <property type="term" value="F:sequence-specific DNA binding"/>
    <property type="evidence" value="ECO:0007669"/>
    <property type="project" value="UniProtKB-ARBA"/>
</dbReference>
<dbReference type="GO" id="GO:0010045">
    <property type="term" value="P:response to nickel cation"/>
    <property type="evidence" value="ECO:0007669"/>
    <property type="project" value="InterPro"/>
</dbReference>
<dbReference type="CDD" id="cd22231">
    <property type="entry name" value="RHH_NikR_HicB-like"/>
    <property type="match status" value="1"/>
</dbReference>
<dbReference type="FunFam" id="1.10.1220.10:FF:000001">
    <property type="entry name" value="Nickel-responsive regulator"/>
    <property type="match status" value="1"/>
</dbReference>
<dbReference type="FunFam" id="3.30.70.1150:FF:000002">
    <property type="entry name" value="Nickel-responsive regulator"/>
    <property type="match status" value="1"/>
</dbReference>
<dbReference type="Gene3D" id="3.30.70.1150">
    <property type="entry name" value="ACT-like. Chain A, domain 2"/>
    <property type="match status" value="1"/>
</dbReference>
<dbReference type="Gene3D" id="1.10.1220.10">
    <property type="entry name" value="Met repressor-like"/>
    <property type="match status" value="1"/>
</dbReference>
<dbReference type="HAMAP" id="MF_00476">
    <property type="entry name" value="NikR"/>
    <property type="match status" value="1"/>
</dbReference>
<dbReference type="InterPro" id="IPR027271">
    <property type="entry name" value="Acetolactate_synth/TF_NikR_C"/>
</dbReference>
<dbReference type="InterPro" id="IPR045865">
    <property type="entry name" value="ACT-like_dom_sf"/>
</dbReference>
<dbReference type="InterPro" id="IPR013321">
    <property type="entry name" value="Arc_rbn_hlx_hlx"/>
</dbReference>
<dbReference type="InterPro" id="IPR002145">
    <property type="entry name" value="CopG"/>
</dbReference>
<dbReference type="InterPro" id="IPR050192">
    <property type="entry name" value="CopG/NikR_regulator"/>
</dbReference>
<dbReference type="InterPro" id="IPR022988">
    <property type="entry name" value="Ni_resp_reg_NikR"/>
</dbReference>
<dbReference type="InterPro" id="IPR014160">
    <property type="entry name" value="Nickel_NikR_proteobac"/>
</dbReference>
<dbReference type="InterPro" id="IPR010985">
    <property type="entry name" value="Ribbon_hlx_hlx"/>
</dbReference>
<dbReference type="InterPro" id="IPR014864">
    <property type="entry name" value="TF_NikR_Ni-bd_C"/>
</dbReference>
<dbReference type="NCBIfam" id="TIGR02793">
    <property type="entry name" value="nikR"/>
    <property type="match status" value="1"/>
</dbReference>
<dbReference type="NCBIfam" id="NF002815">
    <property type="entry name" value="PRK02967.1"/>
    <property type="match status" value="1"/>
</dbReference>
<dbReference type="NCBIfam" id="NF003381">
    <property type="entry name" value="PRK04460.1"/>
    <property type="match status" value="1"/>
</dbReference>
<dbReference type="PANTHER" id="PTHR34719">
    <property type="entry name" value="NICKEL-RESPONSIVE REGULATOR"/>
    <property type="match status" value="1"/>
</dbReference>
<dbReference type="PANTHER" id="PTHR34719:SF2">
    <property type="entry name" value="NICKEL-RESPONSIVE REGULATOR"/>
    <property type="match status" value="1"/>
</dbReference>
<dbReference type="Pfam" id="PF08753">
    <property type="entry name" value="NikR_C"/>
    <property type="match status" value="1"/>
</dbReference>
<dbReference type="Pfam" id="PF01402">
    <property type="entry name" value="RHH_1"/>
    <property type="match status" value="1"/>
</dbReference>
<dbReference type="SUPFAM" id="SSF55021">
    <property type="entry name" value="ACT-like"/>
    <property type="match status" value="1"/>
</dbReference>
<dbReference type="SUPFAM" id="SSF47598">
    <property type="entry name" value="Ribbon-helix-helix"/>
    <property type="match status" value="1"/>
</dbReference>
<name>NIKR_ESCF3</name>
<evidence type="ECO:0000255" key="1">
    <source>
        <dbReference type="HAMAP-Rule" id="MF_00476"/>
    </source>
</evidence>
<reference key="1">
    <citation type="journal article" date="2009" name="PLoS Genet.">
        <title>Organised genome dynamics in the Escherichia coli species results in highly diverse adaptive paths.</title>
        <authorList>
            <person name="Touchon M."/>
            <person name="Hoede C."/>
            <person name="Tenaillon O."/>
            <person name="Barbe V."/>
            <person name="Baeriswyl S."/>
            <person name="Bidet P."/>
            <person name="Bingen E."/>
            <person name="Bonacorsi S."/>
            <person name="Bouchier C."/>
            <person name="Bouvet O."/>
            <person name="Calteau A."/>
            <person name="Chiapello H."/>
            <person name="Clermont O."/>
            <person name="Cruveiller S."/>
            <person name="Danchin A."/>
            <person name="Diard M."/>
            <person name="Dossat C."/>
            <person name="Karoui M.E."/>
            <person name="Frapy E."/>
            <person name="Garry L."/>
            <person name="Ghigo J.M."/>
            <person name="Gilles A.M."/>
            <person name="Johnson J."/>
            <person name="Le Bouguenec C."/>
            <person name="Lescat M."/>
            <person name="Mangenot S."/>
            <person name="Martinez-Jehanne V."/>
            <person name="Matic I."/>
            <person name="Nassif X."/>
            <person name="Oztas S."/>
            <person name="Petit M.A."/>
            <person name="Pichon C."/>
            <person name="Rouy Z."/>
            <person name="Ruf C.S."/>
            <person name="Schneider D."/>
            <person name="Tourret J."/>
            <person name="Vacherie B."/>
            <person name="Vallenet D."/>
            <person name="Medigue C."/>
            <person name="Rocha E.P.C."/>
            <person name="Denamur E."/>
        </authorList>
    </citation>
    <scope>NUCLEOTIDE SEQUENCE [LARGE SCALE GENOMIC DNA]</scope>
    <source>
        <strain>ATCC 35469 / DSM 13698 / BCRC 15582 / CCUG 18766 / IAM 14443 / JCM 21226 / LMG 7866 / NBRC 102419 / NCTC 12128 / CDC 0568-73</strain>
    </source>
</reference>